<reference key="1">
    <citation type="submission" date="2008-12" db="EMBL/GenBank/DDBJ databases">
        <title>Complete sequence of chromosome of Shewanella baltica OS223.</title>
        <authorList>
            <consortium name="US DOE Joint Genome Institute"/>
            <person name="Lucas S."/>
            <person name="Copeland A."/>
            <person name="Lapidus A."/>
            <person name="Glavina del Rio T."/>
            <person name="Dalin E."/>
            <person name="Tice H."/>
            <person name="Bruce D."/>
            <person name="Goodwin L."/>
            <person name="Pitluck S."/>
            <person name="Chertkov O."/>
            <person name="Meincke L."/>
            <person name="Brettin T."/>
            <person name="Detter J.C."/>
            <person name="Han C."/>
            <person name="Kuske C.R."/>
            <person name="Larimer F."/>
            <person name="Land M."/>
            <person name="Hauser L."/>
            <person name="Kyrpides N."/>
            <person name="Ovchinnikova G."/>
            <person name="Brettar I."/>
            <person name="Rodrigues J."/>
            <person name="Konstantinidis K."/>
            <person name="Tiedje J."/>
        </authorList>
    </citation>
    <scope>NUCLEOTIDE SEQUENCE [LARGE SCALE GENOMIC DNA]</scope>
    <source>
        <strain>OS223</strain>
    </source>
</reference>
<sequence length="629" mass="69313">MHFHERFDVIVVGGGHAGTEAALAAARMGSKTLLLTHNIDTLGQMSCNPAIGGIGKGHLVKEIDALGGAMAIATDYAGIQFRTLNSSKGPAVRATRAQADRALYRQKIQNILQNQPNLRIFQQAVDDLIVENHQVVGVVTQMGLAFESPAVVLTTGTFLSGKIHIGLENYSGGRAGDPPAIALANRLRELPIRVGRLKTGTPPRIDANTIDFSQMAEQKGDSPLPVMSFMGDVSHHPKQISCWITHTNEKTHEIIRGGLDRSPMYSGVIEGIGPRYCPSIEDKIHRFADKSSHQIFIEPEGLNTNEIYPNGISTSLPFDVQLNLVRSIKGMENAEIMRPGYAIEYDYFDPRDLKNSLETKAINGLFFAGQINGTTGYEEAGAQGLLAGMNASLQVQGKEAWCPRRDEAYLGVLVDDLSTLGTKEPYRMFTSRAEYRLLLREDNADIRLTAKGRELGLVDDARWAAFSEKLESIELELQRLRGQWVHPNSPLIHALNPHLNTPISREASFEELLRRPEMDYSKLMQIEGFGPGLEDPQAAEQVQIQVKYSGYIQRQQEEINKAVRNENTGLPLTLDYKEVPGLSNEVIAKLNNHKPETIGQASRISGITPAAISILLVHLKKRGLLRKSA</sequence>
<dbReference type="EMBL" id="CP001252">
    <property type="protein sequence ID" value="ACK48787.1"/>
    <property type="molecule type" value="Genomic_DNA"/>
</dbReference>
<dbReference type="RefSeq" id="WP_012588971.1">
    <property type="nucleotide sequence ID" value="NC_011663.1"/>
</dbReference>
<dbReference type="SMR" id="B8EDW1"/>
<dbReference type="KEGG" id="sbp:Sbal223_4321"/>
<dbReference type="HOGENOM" id="CLU_007831_2_2_6"/>
<dbReference type="Proteomes" id="UP000002507">
    <property type="component" value="Chromosome"/>
</dbReference>
<dbReference type="GO" id="GO:0005829">
    <property type="term" value="C:cytosol"/>
    <property type="evidence" value="ECO:0007669"/>
    <property type="project" value="TreeGrafter"/>
</dbReference>
<dbReference type="GO" id="GO:0050660">
    <property type="term" value="F:flavin adenine dinucleotide binding"/>
    <property type="evidence" value="ECO:0007669"/>
    <property type="project" value="UniProtKB-UniRule"/>
</dbReference>
<dbReference type="GO" id="GO:0030488">
    <property type="term" value="P:tRNA methylation"/>
    <property type="evidence" value="ECO:0007669"/>
    <property type="project" value="TreeGrafter"/>
</dbReference>
<dbReference type="GO" id="GO:0002098">
    <property type="term" value="P:tRNA wobble uridine modification"/>
    <property type="evidence" value="ECO:0007669"/>
    <property type="project" value="InterPro"/>
</dbReference>
<dbReference type="FunFam" id="1.10.10.1800:FF:000001">
    <property type="entry name" value="tRNA uridine 5-carboxymethylaminomethyl modification enzyme MnmG"/>
    <property type="match status" value="1"/>
</dbReference>
<dbReference type="FunFam" id="1.10.150.570:FF:000001">
    <property type="entry name" value="tRNA uridine 5-carboxymethylaminomethyl modification enzyme MnmG"/>
    <property type="match status" value="1"/>
</dbReference>
<dbReference type="FunFam" id="3.50.50.60:FF:000002">
    <property type="entry name" value="tRNA uridine 5-carboxymethylaminomethyl modification enzyme MnmG"/>
    <property type="match status" value="1"/>
</dbReference>
<dbReference type="FunFam" id="3.50.50.60:FF:000010">
    <property type="entry name" value="tRNA uridine 5-carboxymethylaminomethyl modification enzyme MnmG"/>
    <property type="match status" value="1"/>
</dbReference>
<dbReference type="Gene3D" id="3.50.50.60">
    <property type="entry name" value="FAD/NAD(P)-binding domain"/>
    <property type="match status" value="2"/>
</dbReference>
<dbReference type="Gene3D" id="1.10.150.570">
    <property type="entry name" value="GidA associated domain, C-terminal subdomain"/>
    <property type="match status" value="1"/>
</dbReference>
<dbReference type="Gene3D" id="1.10.10.1800">
    <property type="entry name" value="tRNA uridine 5-carboxymethylaminomethyl modification enzyme MnmG/GidA"/>
    <property type="match status" value="1"/>
</dbReference>
<dbReference type="HAMAP" id="MF_00129">
    <property type="entry name" value="MnmG_GidA"/>
    <property type="match status" value="1"/>
</dbReference>
<dbReference type="InterPro" id="IPR036188">
    <property type="entry name" value="FAD/NAD-bd_sf"/>
</dbReference>
<dbReference type="InterPro" id="IPR049312">
    <property type="entry name" value="GIDA_C_N"/>
</dbReference>
<dbReference type="InterPro" id="IPR004416">
    <property type="entry name" value="MnmG"/>
</dbReference>
<dbReference type="InterPro" id="IPR002218">
    <property type="entry name" value="MnmG-rel"/>
</dbReference>
<dbReference type="InterPro" id="IPR020595">
    <property type="entry name" value="MnmG-rel_CS"/>
</dbReference>
<dbReference type="InterPro" id="IPR026904">
    <property type="entry name" value="MnmG_C"/>
</dbReference>
<dbReference type="InterPro" id="IPR047001">
    <property type="entry name" value="MnmG_C_subdom"/>
</dbReference>
<dbReference type="InterPro" id="IPR044920">
    <property type="entry name" value="MnmG_C_subdom_sf"/>
</dbReference>
<dbReference type="InterPro" id="IPR040131">
    <property type="entry name" value="MnmG_N"/>
</dbReference>
<dbReference type="NCBIfam" id="TIGR00136">
    <property type="entry name" value="mnmG_gidA"/>
    <property type="match status" value="1"/>
</dbReference>
<dbReference type="PANTHER" id="PTHR11806">
    <property type="entry name" value="GLUCOSE INHIBITED DIVISION PROTEIN A"/>
    <property type="match status" value="1"/>
</dbReference>
<dbReference type="PANTHER" id="PTHR11806:SF0">
    <property type="entry name" value="PROTEIN MTO1 HOMOLOG, MITOCHONDRIAL"/>
    <property type="match status" value="1"/>
</dbReference>
<dbReference type="Pfam" id="PF01134">
    <property type="entry name" value="GIDA"/>
    <property type="match status" value="1"/>
</dbReference>
<dbReference type="Pfam" id="PF21680">
    <property type="entry name" value="GIDA_C_1st"/>
    <property type="match status" value="1"/>
</dbReference>
<dbReference type="Pfam" id="PF13932">
    <property type="entry name" value="SAM_GIDA_C"/>
    <property type="match status" value="1"/>
</dbReference>
<dbReference type="SMART" id="SM01228">
    <property type="entry name" value="GIDA_assoc_3"/>
    <property type="match status" value="1"/>
</dbReference>
<dbReference type="SUPFAM" id="SSF51905">
    <property type="entry name" value="FAD/NAD(P)-binding domain"/>
    <property type="match status" value="1"/>
</dbReference>
<dbReference type="PROSITE" id="PS01280">
    <property type="entry name" value="GIDA_1"/>
    <property type="match status" value="1"/>
</dbReference>
<dbReference type="PROSITE" id="PS01281">
    <property type="entry name" value="GIDA_2"/>
    <property type="match status" value="1"/>
</dbReference>
<comment type="function">
    <text evidence="1">NAD-binding protein involved in the addition of a carboxymethylaminomethyl (cmnm) group at the wobble position (U34) of certain tRNAs, forming tRNA-cmnm(5)s(2)U34.</text>
</comment>
<comment type="cofactor">
    <cofactor evidence="1">
        <name>FAD</name>
        <dbReference type="ChEBI" id="CHEBI:57692"/>
    </cofactor>
</comment>
<comment type="subunit">
    <text evidence="1">Homodimer. Heterotetramer of two MnmE and two MnmG subunits.</text>
</comment>
<comment type="subcellular location">
    <subcellularLocation>
        <location evidence="1">Cytoplasm</location>
    </subcellularLocation>
</comment>
<comment type="similarity">
    <text evidence="1">Belongs to the MnmG family.</text>
</comment>
<organism>
    <name type="scientific">Shewanella baltica (strain OS223)</name>
    <dbReference type="NCBI Taxonomy" id="407976"/>
    <lineage>
        <taxon>Bacteria</taxon>
        <taxon>Pseudomonadati</taxon>
        <taxon>Pseudomonadota</taxon>
        <taxon>Gammaproteobacteria</taxon>
        <taxon>Alteromonadales</taxon>
        <taxon>Shewanellaceae</taxon>
        <taxon>Shewanella</taxon>
    </lineage>
</organism>
<accession>B8EDW1</accession>
<name>MNMG_SHEB2</name>
<protein>
    <recommendedName>
        <fullName evidence="1">tRNA uridine 5-carboxymethylaminomethyl modification enzyme MnmG</fullName>
    </recommendedName>
    <alternativeName>
        <fullName evidence="1">Glucose-inhibited division protein A</fullName>
    </alternativeName>
</protein>
<feature type="chain" id="PRO_1000122755" description="tRNA uridine 5-carboxymethylaminomethyl modification enzyme MnmG">
    <location>
        <begin position="1"/>
        <end position="629"/>
    </location>
</feature>
<feature type="binding site" evidence="1">
    <location>
        <begin position="13"/>
        <end position="18"/>
    </location>
    <ligand>
        <name>FAD</name>
        <dbReference type="ChEBI" id="CHEBI:57692"/>
    </ligand>
</feature>
<feature type="binding site" evidence="1">
    <location>
        <begin position="273"/>
        <end position="287"/>
    </location>
    <ligand>
        <name>NAD(+)</name>
        <dbReference type="ChEBI" id="CHEBI:57540"/>
    </ligand>
</feature>
<proteinExistence type="inferred from homology"/>
<keyword id="KW-0963">Cytoplasm</keyword>
<keyword id="KW-0274">FAD</keyword>
<keyword id="KW-0285">Flavoprotein</keyword>
<keyword id="KW-0520">NAD</keyword>
<keyword id="KW-0819">tRNA processing</keyword>
<evidence type="ECO:0000255" key="1">
    <source>
        <dbReference type="HAMAP-Rule" id="MF_00129"/>
    </source>
</evidence>
<gene>
    <name evidence="1" type="primary">mnmG</name>
    <name evidence="1" type="synonym">gidA</name>
    <name type="ordered locus">Sbal223_4321</name>
</gene>